<accession>Q0VSR8</accession>
<sequence length="89" mass="10410">MALTVEQKAEILKEHGRKENDTGSPEVQVALLSANINGLQDHFKGHKKDHHSRRGLIRMVNQRRKLLDYLAKKDRTRYLQLIEKLGLRR</sequence>
<evidence type="ECO:0000255" key="1">
    <source>
        <dbReference type="HAMAP-Rule" id="MF_01343"/>
    </source>
</evidence>
<evidence type="ECO:0000305" key="2"/>
<proteinExistence type="inferred from homology"/>
<reference key="1">
    <citation type="journal article" date="2006" name="Nat. Biotechnol.">
        <title>Genome sequence of the ubiquitous hydrocarbon-degrading marine bacterium Alcanivorax borkumensis.</title>
        <authorList>
            <person name="Schneiker S."/>
            <person name="Martins dos Santos V.A.P."/>
            <person name="Bartels D."/>
            <person name="Bekel T."/>
            <person name="Brecht M."/>
            <person name="Buhrmester J."/>
            <person name="Chernikova T.N."/>
            <person name="Denaro R."/>
            <person name="Ferrer M."/>
            <person name="Gertler C."/>
            <person name="Goesmann A."/>
            <person name="Golyshina O.V."/>
            <person name="Kaminski F."/>
            <person name="Khachane A.N."/>
            <person name="Lang S."/>
            <person name="Linke B."/>
            <person name="McHardy A.C."/>
            <person name="Meyer F."/>
            <person name="Nechitaylo T."/>
            <person name="Puehler A."/>
            <person name="Regenhardt D."/>
            <person name="Rupp O."/>
            <person name="Sabirova J.S."/>
            <person name="Selbitschka W."/>
            <person name="Yakimov M.M."/>
            <person name="Timmis K.N."/>
            <person name="Vorhoelter F.-J."/>
            <person name="Weidner S."/>
            <person name="Kaiser O."/>
            <person name="Golyshin P.N."/>
        </authorList>
    </citation>
    <scope>NUCLEOTIDE SEQUENCE [LARGE SCALE GENOMIC DNA]</scope>
    <source>
        <strain>ATCC 700651 / DSM 11573 / NCIMB 13689 / SK2</strain>
    </source>
</reference>
<organism>
    <name type="scientific">Alcanivorax borkumensis (strain ATCC 700651 / DSM 11573 / NCIMB 13689 / SK2)</name>
    <dbReference type="NCBI Taxonomy" id="393595"/>
    <lineage>
        <taxon>Bacteria</taxon>
        <taxon>Pseudomonadati</taxon>
        <taxon>Pseudomonadota</taxon>
        <taxon>Gammaproteobacteria</taxon>
        <taxon>Oceanospirillales</taxon>
        <taxon>Alcanivoracaceae</taxon>
        <taxon>Alcanivorax</taxon>
    </lineage>
</organism>
<feature type="chain" id="PRO_0000255474" description="Small ribosomal subunit protein uS15">
    <location>
        <begin position="1"/>
        <end position="89"/>
    </location>
</feature>
<name>RS15_ALCBS</name>
<protein>
    <recommendedName>
        <fullName evidence="1">Small ribosomal subunit protein uS15</fullName>
    </recommendedName>
    <alternativeName>
        <fullName evidence="2">30S ribosomal protein S15</fullName>
    </alternativeName>
</protein>
<dbReference type="EMBL" id="AM286690">
    <property type="protein sequence ID" value="CAL15780.1"/>
    <property type="molecule type" value="Genomic_DNA"/>
</dbReference>
<dbReference type="RefSeq" id="WP_007148581.1">
    <property type="nucleotide sequence ID" value="NC_008260.1"/>
</dbReference>
<dbReference type="SMR" id="Q0VSR8"/>
<dbReference type="STRING" id="393595.ABO_0332"/>
<dbReference type="KEGG" id="abo:ABO_0332"/>
<dbReference type="eggNOG" id="COG0184">
    <property type="taxonomic scope" value="Bacteria"/>
</dbReference>
<dbReference type="HOGENOM" id="CLU_148518_0_0_6"/>
<dbReference type="OrthoDB" id="9799262at2"/>
<dbReference type="Proteomes" id="UP000008871">
    <property type="component" value="Chromosome"/>
</dbReference>
<dbReference type="GO" id="GO:0022627">
    <property type="term" value="C:cytosolic small ribosomal subunit"/>
    <property type="evidence" value="ECO:0007669"/>
    <property type="project" value="TreeGrafter"/>
</dbReference>
<dbReference type="GO" id="GO:0019843">
    <property type="term" value="F:rRNA binding"/>
    <property type="evidence" value="ECO:0007669"/>
    <property type="project" value="UniProtKB-UniRule"/>
</dbReference>
<dbReference type="GO" id="GO:0003735">
    <property type="term" value="F:structural constituent of ribosome"/>
    <property type="evidence" value="ECO:0007669"/>
    <property type="project" value="InterPro"/>
</dbReference>
<dbReference type="GO" id="GO:0006412">
    <property type="term" value="P:translation"/>
    <property type="evidence" value="ECO:0007669"/>
    <property type="project" value="UniProtKB-UniRule"/>
</dbReference>
<dbReference type="CDD" id="cd00353">
    <property type="entry name" value="Ribosomal_S15p_S13e"/>
    <property type="match status" value="1"/>
</dbReference>
<dbReference type="FunFam" id="1.10.287.10:FF:000002">
    <property type="entry name" value="30S ribosomal protein S15"/>
    <property type="match status" value="1"/>
</dbReference>
<dbReference type="Gene3D" id="6.10.250.3130">
    <property type="match status" value="1"/>
</dbReference>
<dbReference type="Gene3D" id="1.10.287.10">
    <property type="entry name" value="S15/NS1, RNA-binding"/>
    <property type="match status" value="1"/>
</dbReference>
<dbReference type="HAMAP" id="MF_01343_B">
    <property type="entry name" value="Ribosomal_uS15_B"/>
    <property type="match status" value="1"/>
</dbReference>
<dbReference type="InterPro" id="IPR000589">
    <property type="entry name" value="Ribosomal_uS15"/>
</dbReference>
<dbReference type="InterPro" id="IPR005290">
    <property type="entry name" value="Ribosomal_uS15_bac-type"/>
</dbReference>
<dbReference type="InterPro" id="IPR009068">
    <property type="entry name" value="uS15_NS1_RNA-bd_sf"/>
</dbReference>
<dbReference type="NCBIfam" id="TIGR00952">
    <property type="entry name" value="S15_bact"/>
    <property type="match status" value="1"/>
</dbReference>
<dbReference type="PANTHER" id="PTHR23321">
    <property type="entry name" value="RIBOSOMAL PROTEIN S15, BACTERIAL AND ORGANELLAR"/>
    <property type="match status" value="1"/>
</dbReference>
<dbReference type="PANTHER" id="PTHR23321:SF26">
    <property type="entry name" value="SMALL RIBOSOMAL SUBUNIT PROTEIN US15M"/>
    <property type="match status" value="1"/>
</dbReference>
<dbReference type="Pfam" id="PF00312">
    <property type="entry name" value="Ribosomal_S15"/>
    <property type="match status" value="1"/>
</dbReference>
<dbReference type="SMART" id="SM01387">
    <property type="entry name" value="Ribosomal_S15"/>
    <property type="match status" value="1"/>
</dbReference>
<dbReference type="SUPFAM" id="SSF47060">
    <property type="entry name" value="S15/NS1 RNA-binding domain"/>
    <property type="match status" value="1"/>
</dbReference>
<dbReference type="PROSITE" id="PS00362">
    <property type="entry name" value="RIBOSOMAL_S15"/>
    <property type="match status" value="1"/>
</dbReference>
<comment type="function">
    <text evidence="1">One of the primary rRNA binding proteins, it binds directly to 16S rRNA where it helps nucleate assembly of the platform of the 30S subunit by binding and bridging several RNA helices of the 16S rRNA.</text>
</comment>
<comment type="function">
    <text evidence="1">Forms an intersubunit bridge (bridge B4) with the 23S rRNA of the 50S subunit in the ribosome.</text>
</comment>
<comment type="subunit">
    <text evidence="1">Part of the 30S ribosomal subunit. Forms a bridge to the 50S subunit in the 70S ribosome, contacting the 23S rRNA.</text>
</comment>
<comment type="similarity">
    <text evidence="1">Belongs to the universal ribosomal protein uS15 family.</text>
</comment>
<gene>
    <name evidence="1" type="primary">rpsO</name>
    <name type="ordered locus">ABO_0332</name>
</gene>
<keyword id="KW-1185">Reference proteome</keyword>
<keyword id="KW-0687">Ribonucleoprotein</keyword>
<keyword id="KW-0689">Ribosomal protein</keyword>
<keyword id="KW-0694">RNA-binding</keyword>
<keyword id="KW-0699">rRNA-binding</keyword>